<comment type="function">
    <text evidence="1 4 8">RuBisCO catalyzes two reactions: the carboxylation of D-ribulose 1,5-bisphosphate, the primary event in carbon dioxide fixation, as well as the oxidative fragmentation of the pentose substrate (PubMed:3681999). Both reactions occur simultaneously and in competition at the same active site (Probable). Involved in antiviral defenses (By similarity).</text>
</comment>
<comment type="subunit">
    <text evidence="2 3 4">Heterohexadecamer of 8 large and 8 small subunits.</text>
</comment>
<comment type="subunit">
    <text evidence="1 8">(Microbial infection) Binds to tobamovirus movement protein; this interaction seems required for viral systemic movement.</text>
</comment>
<comment type="interaction">
    <interactant intactId="EBI-1766821">
        <id>P69249</id>
    </interactant>
    <interactant intactId="EBI-639063">
        <id>O81283</id>
        <label>TOC159</label>
    </interactant>
    <organismsDiffer>true</organismsDiffer>
    <experiments>5</experiments>
</comment>
<comment type="interaction">
    <interactant intactId="EBI-1766821">
        <id>P69249</id>
    </interactant>
    <interactant intactId="EBI-1766808">
        <id>Q38906</id>
        <label>TOC34</label>
    </interactant>
    <organismsDiffer>true</organismsDiffer>
    <experiments>6</experiments>
</comment>
<comment type="subcellular location">
    <subcellularLocation>
        <location evidence="2 8">Plastid</location>
        <location evidence="2 8">Chloroplast</location>
    </subcellularLocation>
</comment>
<comment type="subcellular location">
    <subcellularLocation>
        <location evidence="1">Cell junction</location>
        <location evidence="1">Plasmodesma</location>
    </subcellularLocation>
    <text evidence="1">(Microbial infection) May be present in virus replication complexes (VRCs) of tobamovirus infected cells.</text>
</comment>
<comment type="miscellaneous">
    <text evidence="2 3 4">The basic functional RuBisCO is composed of a large chain homodimer in a 'head-to-tail' conformation. In form I RuBisCO this homodimer is arranged in a barrel-like tetramer with the small subunits forming a tetrameric 'cap' on each end of the 'barrel'.</text>
</comment>
<comment type="similarity">
    <text evidence="2">Belongs to the RuBisCO small chain family.</text>
</comment>
<protein>
    <recommendedName>
        <fullName evidence="2 6">Ribulose bisphosphate carboxylase small subunit, chloroplastic</fullName>
        <shortName evidence="2 6">RuBisCO small subunit</shortName>
    </recommendedName>
    <alternativeName>
        <fullName evidence="7">TSSU3-8</fullName>
    </alternativeName>
</protein>
<accession>P69249</accession>
<accession>P00866</accession>
<accession>P00867</accession>
<accession>P26666</accession>
<dbReference type="EMBL" id="X02353">
    <property type="protein sequence ID" value="CAA26208.1"/>
    <property type="molecule type" value="Genomic_DNA"/>
</dbReference>
<dbReference type="EMBL" id="M32419">
    <property type="protein sequence ID" value="AAA34116.1"/>
    <property type="molecule type" value="Genomic_DNA"/>
</dbReference>
<dbReference type="PIR" id="A22934">
    <property type="entry name" value="RKNTSP"/>
</dbReference>
<dbReference type="PDB" id="1EJ7">
    <property type="method" value="X-ray"/>
    <property type="resolution" value="2.45 A"/>
    <property type="chains" value="S=58-180"/>
</dbReference>
<dbReference type="PDB" id="1RLC">
    <property type="method" value="X-ray"/>
    <property type="resolution" value="2.70 A"/>
    <property type="chains" value="S=58-180"/>
</dbReference>
<dbReference type="PDB" id="1RLD">
    <property type="method" value="X-ray"/>
    <property type="resolution" value="2.50 A"/>
    <property type="chains" value="S/T=58-180"/>
</dbReference>
<dbReference type="PDB" id="3RUB">
    <property type="method" value="X-ray"/>
    <property type="resolution" value="2.00 A"/>
    <property type="chains" value="S=58-180"/>
</dbReference>
<dbReference type="PDB" id="4RUB">
    <property type="method" value="X-ray"/>
    <property type="resolution" value="2.70 A"/>
    <property type="chains" value="S/T/U/V=58-180"/>
</dbReference>
<dbReference type="PDBsum" id="1EJ7"/>
<dbReference type="PDBsum" id="1RLC"/>
<dbReference type="PDBsum" id="1RLD"/>
<dbReference type="PDBsum" id="3RUB"/>
<dbReference type="PDBsum" id="4RUB"/>
<dbReference type="SMR" id="P69249"/>
<dbReference type="DIP" id="DIP-40635N"/>
<dbReference type="IntAct" id="P69249">
    <property type="interactions" value="4"/>
</dbReference>
<dbReference type="MINT" id="P69249"/>
<dbReference type="STRING" id="4097.P69249"/>
<dbReference type="PaxDb" id="4097-P69249"/>
<dbReference type="GeneID" id="107766567"/>
<dbReference type="GeneID" id="107802883"/>
<dbReference type="KEGG" id="nta:107766567"/>
<dbReference type="KEGG" id="nta:107802883"/>
<dbReference type="OMA" id="RKNWVPC"/>
<dbReference type="OrthoDB" id="1218907at2759"/>
<dbReference type="PhylomeDB" id="P69249"/>
<dbReference type="BRENDA" id="4.1.1.39">
    <property type="organism ID" value="3645"/>
</dbReference>
<dbReference type="SABIO-RK" id="P69249"/>
<dbReference type="EvolutionaryTrace" id="P69249"/>
<dbReference type="Proteomes" id="UP000084051">
    <property type="component" value="Unplaced"/>
</dbReference>
<dbReference type="GO" id="GO:0009507">
    <property type="term" value="C:chloroplast"/>
    <property type="evidence" value="ECO:0007669"/>
    <property type="project" value="UniProtKB-SubCell"/>
</dbReference>
<dbReference type="GO" id="GO:0009506">
    <property type="term" value="C:plasmodesma"/>
    <property type="evidence" value="ECO:0007669"/>
    <property type="project" value="UniProtKB-SubCell"/>
</dbReference>
<dbReference type="GO" id="GO:0016984">
    <property type="term" value="F:ribulose-bisphosphate carboxylase activity"/>
    <property type="evidence" value="ECO:0007669"/>
    <property type="project" value="UniProtKB-UniRule"/>
</dbReference>
<dbReference type="GO" id="GO:0051607">
    <property type="term" value="P:defense response to virus"/>
    <property type="evidence" value="ECO:0007669"/>
    <property type="project" value="UniProtKB-KW"/>
</dbReference>
<dbReference type="GO" id="GO:0009853">
    <property type="term" value="P:photorespiration"/>
    <property type="evidence" value="ECO:0007669"/>
    <property type="project" value="UniProtKB-KW"/>
</dbReference>
<dbReference type="GO" id="GO:0019253">
    <property type="term" value="P:reductive pentose-phosphate cycle"/>
    <property type="evidence" value="ECO:0007669"/>
    <property type="project" value="UniProtKB-UniRule"/>
</dbReference>
<dbReference type="CDD" id="cd03527">
    <property type="entry name" value="RuBisCO_small"/>
    <property type="match status" value="1"/>
</dbReference>
<dbReference type="FunFam" id="3.30.190.10:FF:000001">
    <property type="entry name" value="Ribulose bisphosphate carboxylase small chain, chloroplastic"/>
    <property type="match status" value="1"/>
</dbReference>
<dbReference type="Gene3D" id="3.30.190.10">
    <property type="entry name" value="Ribulose bisphosphate carboxylase, small subunit"/>
    <property type="match status" value="1"/>
</dbReference>
<dbReference type="HAMAP" id="MF_00859">
    <property type="entry name" value="RuBisCO_S_bact"/>
    <property type="match status" value="1"/>
</dbReference>
<dbReference type="InterPro" id="IPR024681">
    <property type="entry name" value="RuBisCO_ssu"/>
</dbReference>
<dbReference type="InterPro" id="IPR000894">
    <property type="entry name" value="RuBisCO_ssu_dom"/>
</dbReference>
<dbReference type="InterPro" id="IPR024680">
    <property type="entry name" value="RuBisCO_ssu_N"/>
</dbReference>
<dbReference type="InterPro" id="IPR036385">
    <property type="entry name" value="RuBisCO_ssu_sf"/>
</dbReference>
<dbReference type="PANTHER" id="PTHR31262">
    <property type="entry name" value="RIBULOSE BISPHOSPHATE CARBOXYLASE SMALL CHAIN 1, CHLOROPLASTIC"/>
    <property type="match status" value="1"/>
</dbReference>
<dbReference type="PANTHER" id="PTHR31262:SF10">
    <property type="entry name" value="RIBULOSE BISPHOSPHATE CARBOXYLASE SMALL SUBUNIT 1A, CHLOROPLASTIC-RELATED"/>
    <property type="match status" value="1"/>
</dbReference>
<dbReference type="Pfam" id="PF12338">
    <property type="entry name" value="RbcS"/>
    <property type="match status" value="1"/>
</dbReference>
<dbReference type="Pfam" id="PF00101">
    <property type="entry name" value="RuBisCO_small"/>
    <property type="match status" value="1"/>
</dbReference>
<dbReference type="PRINTS" id="PR00152">
    <property type="entry name" value="RUBISCOSMALL"/>
</dbReference>
<dbReference type="SMART" id="SM00961">
    <property type="entry name" value="RuBisCO_small"/>
    <property type="match status" value="1"/>
</dbReference>
<dbReference type="SUPFAM" id="SSF55239">
    <property type="entry name" value="RuBisCO, small subunit"/>
    <property type="match status" value="1"/>
</dbReference>
<keyword id="KW-0002">3D-structure</keyword>
<keyword id="KW-0051">Antiviral defense</keyword>
<keyword id="KW-0113">Calvin cycle</keyword>
<keyword id="KW-0120">Carbon dioxide fixation</keyword>
<keyword id="KW-0965">Cell junction</keyword>
<keyword id="KW-0150">Chloroplast</keyword>
<keyword id="KW-0903">Direct protein sequencing</keyword>
<keyword id="KW-0601">Photorespiration</keyword>
<keyword id="KW-0602">Photosynthesis</keyword>
<keyword id="KW-0934">Plastid</keyword>
<keyword id="KW-1185">Reference proteome</keyword>
<keyword id="KW-0809">Transit peptide</keyword>
<name>RBS_TOBAC</name>
<feature type="transit peptide" description="Chloroplast" evidence="5">
    <location>
        <begin position="1"/>
        <end position="57"/>
    </location>
</feature>
<feature type="transit peptide" description="Chloroplast" evidence="2">
    <location>
        <begin position="1"/>
        <end position="56"/>
    </location>
</feature>
<feature type="chain" id="PRO_0000031560" description="Ribulose bisphosphate carboxylase small subunit, chloroplastic" evidence="2">
    <location>
        <begin position="57"/>
        <end position="180"/>
    </location>
</feature>
<feature type="sequence conflict" description="In Ref. 2; AA sequence." evidence="8" ref="2">
    <original>VE</original>
    <variation>PD</variation>
    <location>
        <begin position="87"/>
        <end position="88"/>
    </location>
</feature>
<feature type="sequence conflict" description="In Ref. 2; AA sequence." evidence="8" ref="2">
    <original>N</original>
    <variation>D</variation>
    <location>
        <position position="93"/>
    </location>
</feature>
<feature type="sequence conflict" description="In Ref. 2; AA sequence." evidence="8" ref="2">
    <original>Q</original>
    <variation>E</variation>
    <location>
        <position position="153"/>
    </location>
</feature>
<feature type="strand" evidence="12">
    <location>
        <begin position="63"/>
        <end position="65"/>
    </location>
</feature>
<feature type="turn" evidence="12">
    <location>
        <begin position="71"/>
        <end position="74"/>
    </location>
</feature>
<feature type="helix" evidence="12">
    <location>
        <begin position="80"/>
        <end position="92"/>
    </location>
</feature>
<feature type="strand" evidence="12">
    <location>
        <begin position="96"/>
        <end position="104"/>
    </location>
</feature>
<feature type="strand" evidence="12">
    <location>
        <begin position="125"/>
        <end position="128"/>
    </location>
</feature>
<feature type="helix" evidence="12">
    <location>
        <begin position="137"/>
        <end position="150"/>
    </location>
</feature>
<feature type="strand" evidence="12">
    <location>
        <begin position="154"/>
        <end position="162"/>
    </location>
</feature>
<feature type="turn" evidence="12">
    <location>
        <begin position="163"/>
        <end position="166"/>
    </location>
</feature>
<feature type="strand" evidence="12">
    <location>
        <begin position="167"/>
        <end position="175"/>
    </location>
</feature>
<evidence type="ECO:0000250" key="1">
    <source>
        <dbReference type="UniProtKB" id="A0A0S4IJL0"/>
    </source>
</evidence>
<evidence type="ECO:0000255" key="2">
    <source>
        <dbReference type="HAMAP-Rule" id="MF_00860"/>
    </source>
</evidence>
<evidence type="ECO:0000269" key="3">
    <source>
    </source>
</evidence>
<evidence type="ECO:0000269" key="4">
    <source>
    </source>
</evidence>
<evidence type="ECO:0000269" key="5">
    <source ref="2"/>
</evidence>
<evidence type="ECO:0000303" key="6">
    <source>
    </source>
</evidence>
<evidence type="ECO:0000303" key="7">
    <source>
    </source>
</evidence>
<evidence type="ECO:0000305" key="8"/>
<evidence type="ECO:0007744" key="9">
    <source>
        <dbReference type="PDB" id="1EJ7"/>
    </source>
</evidence>
<evidence type="ECO:0007744" key="10">
    <source>
        <dbReference type="PDB" id="3RUB"/>
    </source>
</evidence>
<evidence type="ECO:0007744" key="11">
    <source>
        <dbReference type="PDB" id="4RUB"/>
    </source>
</evidence>
<evidence type="ECO:0007829" key="12">
    <source>
        <dbReference type="PDB" id="3RUB"/>
    </source>
</evidence>
<organism>
    <name type="scientific">Nicotiana tabacum</name>
    <name type="common">Common tobacco</name>
    <dbReference type="NCBI Taxonomy" id="4097"/>
    <lineage>
        <taxon>Eukaryota</taxon>
        <taxon>Viridiplantae</taxon>
        <taxon>Streptophyta</taxon>
        <taxon>Embryophyta</taxon>
        <taxon>Tracheophyta</taxon>
        <taxon>Spermatophyta</taxon>
        <taxon>Magnoliopsida</taxon>
        <taxon>eudicotyledons</taxon>
        <taxon>Gunneridae</taxon>
        <taxon>Pentapetalae</taxon>
        <taxon>asterids</taxon>
        <taxon>lamiids</taxon>
        <taxon>Solanales</taxon>
        <taxon>Solanaceae</taxon>
        <taxon>Nicotianoideae</taxon>
        <taxon>Nicotianeae</taxon>
        <taxon>Nicotiana</taxon>
    </lineage>
</organism>
<reference key="1">
    <citation type="journal article" date="1985" name="Nucleic Acids Res.">
        <title>Sequence of a genomic DNA clone for the small subunit of ribulose bis-phosphate carboxylase-oxygenase from tobacco.</title>
        <authorList>
            <person name="Mazur B.J."/>
            <person name="Chui C.-F."/>
        </authorList>
    </citation>
    <scope>NUCLEOTIDE SEQUENCE [GENOMIC DNA]</scope>
</reference>
<reference key="2">
    <citation type="journal article" date="1983" name="Biochim. Biophys. Acta">
        <title>Amino acid sequence of the small subunit of D-ribulose bisphosphate carboxylase/oxygenase from Nicotiana tabacum.</title>
        <authorList>
            <person name="Mueller K.-D."/>
            <person name="Salnikow J."/>
            <person name="Vater J."/>
        </authorList>
    </citation>
    <scope>PROTEIN SEQUENCE OF 58-180</scope>
</reference>
<reference key="3">
    <citation type="journal article" date="1987" name="Nucleic Acids Res.">
        <title>Isolation of tobacco SSU genes: characterization of a transcriptionally active pseudogene.</title>
        <authorList>
            <person name="O'Neal J.K."/>
            <person name="Pokalsky A.R."/>
            <person name="Kiehne K.L."/>
            <person name="Shewmaker C.K."/>
        </authorList>
    </citation>
    <scope>NUCLEOTIDE SEQUENCE [GENOMIC DNA] OF 1-101</scope>
</reference>
<reference evidence="11" key="4">
    <citation type="journal article" date="1987" name="J. Mol. Biol.">
        <title>A crystal form of ribulose-1,5-bisphosphate carboxylase/oxygenase from Nicotiana tabacum in the activated state.</title>
        <authorList>
            <person name="Suh S.W."/>
            <person name="Cascio D."/>
            <person name="Chapman M.S."/>
            <person name="Eisenberg D."/>
        </authorList>
    </citation>
    <scope>X-RAY CRYSTALLOGRAPHY (2.7 ANGSTROMS) OF 58-180 OF ACTIVATED HOLOENZYME</scope>
    <scope>FUNCTION</scope>
    <scope>CATALYTIC ACTIVITY</scope>
    <scope>SUBUNIT</scope>
</reference>
<reference evidence="10" key="5">
    <citation type="journal article" date="1992" name="J. Biol. Chem.">
        <title>Crystal structure of the unactivated form of ribulose-1,5-bisphosphate carboxylase/oxygenase from tobacco refined at 2.0-A resolution.</title>
        <authorList>
            <person name="Curmi P.M.G."/>
            <person name="Cascio D."/>
            <person name="Sweet R.M."/>
            <person name="Eisenberg D."/>
            <person name="Schreuder H."/>
        </authorList>
    </citation>
    <scope>X-RAY CRYSTALLOGRAPHY (2.0 ANGSTROMS) OF 58-180 OF UNACTIVATED HOLOENZYME</scope>
    <scope>SUBUNIT</scope>
    <source>
        <strain>cv. Turkish samsun</strain>
    </source>
</reference>
<reference evidence="9" key="6">
    <citation type="journal article" date="2000" name="J. Mol. Biol.">
        <title>The transition between the open and closed states of rubisco is triggered by the inter-phosphate distance of the bound bisphosphate.</title>
        <authorList>
            <person name="Duff A.P."/>
            <person name="Andrews T.J."/>
            <person name="Curmi P.M.G."/>
        </authorList>
    </citation>
    <scope>X-RAY CRYSTALLOGRAPHY (2.45 ANGSTROMS) OF 58-180 OF UNACTIVATED HOLOENZYME</scope>
    <scope>SUBUNIT</scope>
    <source>
        <strain>cv. Wisconsin-38</strain>
    </source>
</reference>
<proteinExistence type="evidence at protein level"/>
<sequence>MASSVLSSAAVATRSNVAQANMVAPFTGLKSAASFPVSRKQNLDITSIASNGGRVQCMQVWPPINKKKYETLSYLPDLSQEQLLSEVEYLLKNGWVPCLEFETEHGFVYRENNKSPGYYDGRYWTMWKLPMFGCTDATQVLAEVEEAKKAYPQAWIRIIGFDNVRQVQCISFIAYKPEGY</sequence>
<gene>
    <name evidence="2 6" type="primary">RBCS</name>
</gene>